<accession>Q6BUR3</accession>
<feature type="chain" id="PRO_0000308917" description="Pre-rRNA-processing protein RIX1">
    <location>
        <begin position="1"/>
        <end position="751"/>
    </location>
</feature>
<feature type="region of interest" description="Disordered" evidence="2">
    <location>
        <begin position="447"/>
        <end position="473"/>
    </location>
</feature>
<feature type="region of interest" description="Disordered" evidence="2">
    <location>
        <begin position="588"/>
        <end position="659"/>
    </location>
</feature>
<feature type="region of interest" description="Disordered" evidence="2">
    <location>
        <begin position="693"/>
        <end position="751"/>
    </location>
</feature>
<feature type="compositionally biased region" description="Acidic residues" evidence="2">
    <location>
        <begin position="596"/>
        <end position="628"/>
    </location>
</feature>
<feature type="compositionally biased region" description="Polar residues" evidence="2">
    <location>
        <begin position="702"/>
        <end position="711"/>
    </location>
</feature>
<feature type="compositionally biased region" description="Acidic residues" evidence="2">
    <location>
        <begin position="733"/>
        <end position="751"/>
    </location>
</feature>
<gene>
    <name type="primary">RIX1</name>
    <name type="ordered locus">DEHA2C08690g</name>
</gene>
<comment type="function">
    <text evidence="1">Component of the RIX1 complex required for processing of ITS2 sequences from 35S pre-rRNA and the nucleoplasmic transit of the pre-60S ribosomal subunits. Regulates pre-60S association of the critical remodeling factor MDN1.</text>
</comment>
<comment type="subunit">
    <text evidence="1">Component of the RIX1 complex, composed of IPI1, RIX1/IPI2 and IPI3 in a 1:2:2 stoichiometry. The complex interacts (via RIX1) with MDN1 (via its hexameric AAA ATPase ring) and the pre-60S ribosome particles.</text>
</comment>
<comment type="subcellular location">
    <subcellularLocation>
        <location evidence="1">Nucleus</location>
    </subcellularLocation>
</comment>
<comment type="similarity">
    <text evidence="3">Belongs to the RIX1/PELP1 family.</text>
</comment>
<dbReference type="EMBL" id="CR382135">
    <property type="protein sequence ID" value="CAG86123.2"/>
    <property type="molecule type" value="Genomic_DNA"/>
</dbReference>
<dbReference type="RefSeq" id="XP_458056.2">
    <property type="nucleotide sequence ID" value="XM_458056.1"/>
</dbReference>
<dbReference type="SMR" id="Q6BUR3"/>
<dbReference type="FunCoup" id="Q6BUR3">
    <property type="interactions" value="340"/>
</dbReference>
<dbReference type="STRING" id="284592.Q6BUR3"/>
<dbReference type="GeneID" id="2900509"/>
<dbReference type="KEGG" id="dha:DEHA2C08690g"/>
<dbReference type="VEuPathDB" id="FungiDB:DEHA2C08690g"/>
<dbReference type="eggNOG" id="ENOG502R65X">
    <property type="taxonomic scope" value="Eukaryota"/>
</dbReference>
<dbReference type="HOGENOM" id="CLU_020084_1_0_1"/>
<dbReference type="InParanoid" id="Q6BUR3"/>
<dbReference type="OMA" id="WCGINLI"/>
<dbReference type="OrthoDB" id="20900at2759"/>
<dbReference type="Proteomes" id="UP000000599">
    <property type="component" value="Chromosome C"/>
</dbReference>
<dbReference type="GO" id="GO:0005634">
    <property type="term" value="C:nucleus"/>
    <property type="evidence" value="ECO:0007669"/>
    <property type="project" value="UniProtKB-SubCell"/>
</dbReference>
<dbReference type="GO" id="GO:0006364">
    <property type="term" value="P:rRNA processing"/>
    <property type="evidence" value="ECO:0007669"/>
    <property type="project" value="UniProtKB-KW"/>
</dbReference>
<dbReference type="InterPro" id="IPR016024">
    <property type="entry name" value="ARM-type_fold"/>
</dbReference>
<dbReference type="InterPro" id="IPR012583">
    <property type="entry name" value="RIX1_N"/>
</dbReference>
<dbReference type="PANTHER" id="PTHR34105">
    <property type="entry name" value="PROLINE-, GLUTAMIC ACID- AND LEUCINE-RICH PROTEIN 1"/>
    <property type="match status" value="1"/>
</dbReference>
<dbReference type="PANTHER" id="PTHR34105:SF1">
    <property type="entry name" value="PROLINE-, GLUTAMIC ACID- AND LEUCINE-RICH PROTEIN 1"/>
    <property type="match status" value="1"/>
</dbReference>
<dbReference type="Pfam" id="PF08167">
    <property type="entry name" value="RIX1"/>
    <property type="match status" value="1"/>
</dbReference>
<dbReference type="SUPFAM" id="SSF48371">
    <property type="entry name" value="ARM repeat"/>
    <property type="match status" value="1"/>
</dbReference>
<name>RIX1_DEBHA</name>
<evidence type="ECO:0000250" key="1">
    <source>
        <dbReference type="UniProtKB" id="P38883"/>
    </source>
</evidence>
<evidence type="ECO:0000256" key="2">
    <source>
        <dbReference type="SAM" id="MobiDB-lite"/>
    </source>
</evidence>
<evidence type="ECO:0000305" key="3"/>
<protein>
    <recommendedName>
        <fullName>Pre-rRNA-processing protein RIX1</fullName>
    </recommendedName>
</protein>
<sequence length="751" mass="84823">MSLPLDVILEDLESSPKSIIPILATLHRDKAFLNDISKTDLKHLVSRSLNLSKSHIAYNKWCGINLIKVLSNNYNILANEGVNFMSQLIKILENYNQSIDPKILSSTVECLNNLCNQIRGKPTLTREVLTPKLPTIITLFMEKVAYQPSLILRSLNSLIRKHPTTFRPYGNKLRNRLIELLSSESYSAFPQELKQIICETLATLPIIEKTEPEAKWQGDIVDIVKELSQVLLIYDEFLSLNDDSDLMELFKKIPRTRESEESESSFKFASLEIDINKPDTIFQISDRVELLLSIMKAYLLSETQFSVRVPVGLVLIINEIICSISTKFVPFRKDIRDEKVKKLIKSTTLLNQFNSIKLLSELPIKYQGSLVPHLNNILAFLEILIPFSNKKIDYQEVLSNEIFMCRLLECTGNFISLVSSLSDASLLIRFIDVALCLVEERALNTSPVSDGKKQNQQANGNKKKNKKKNKESVPLSDLLSHQHLFNETIPLSTLNATRRFLNMVITRVNLPPTQHYRVFRYMIIEATVAKSYNKDQNISQELKQLLINSVLYPGFEKNSMLPIITSLLGDDPLLSVFNNPRFPPLPTYIKKSGSVIEDDEEEEESENEDEEMEENENDGSLNVDEESQLESSAKRRKIDISESSAGGGSDQPETVLPGIVLEDTKTKEKIFTNVNPDSVIQFAETSEIVEDVVPEPEATRTEVVTKSSVGTIPTPENPVATSVSVSVDKNEHDESDFEIPDIDVGDDSDDE</sequence>
<organism>
    <name type="scientific">Debaryomyces hansenii (strain ATCC 36239 / CBS 767 / BCRC 21394 / JCM 1990 / NBRC 0083 / IGC 2968)</name>
    <name type="common">Yeast</name>
    <name type="synonym">Torulaspora hansenii</name>
    <dbReference type="NCBI Taxonomy" id="284592"/>
    <lineage>
        <taxon>Eukaryota</taxon>
        <taxon>Fungi</taxon>
        <taxon>Dikarya</taxon>
        <taxon>Ascomycota</taxon>
        <taxon>Saccharomycotina</taxon>
        <taxon>Pichiomycetes</taxon>
        <taxon>Debaryomycetaceae</taxon>
        <taxon>Debaryomyces</taxon>
    </lineage>
</organism>
<keyword id="KW-0539">Nucleus</keyword>
<keyword id="KW-1185">Reference proteome</keyword>
<keyword id="KW-0690">Ribosome biogenesis</keyword>
<keyword id="KW-0698">rRNA processing</keyword>
<proteinExistence type="inferred from homology"/>
<reference key="1">
    <citation type="journal article" date="2004" name="Nature">
        <title>Genome evolution in yeasts.</title>
        <authorList>
            <person name="Dujon B."/>
            <person name="Sherman D."/>
            <person name="Fischer G."/>
            <person name="Durrens P."/>
            <person name="Casaregola S."/>
            <person name="Lafontaine I."/>
            <person name="de Montigny J."/>
            <person name="Marck C."/>
            <person name="Neuveglise C."/>
            <person name="Talla E."/>
            <person name="Goffard N."/>
            <person name="Frangeul L."/>
            <person name="Aigle M."/>
            <person name="Anthouard V."/>
            <person name="Babour A."/>
            <person name="Barbe V."/>
            <person name="Barnay S."/>
            <person name="Blanchin S."/>
            <person name="Beckerich J.-M."/>
            <person name="Beyne E."/>
            <person name="Bleykasten C."/>
            <person name="Boisrame A."/>
            <person name="Boyer J."/>
            <person name="Cattolico L."/>
            <person name="Confanioleri F."/>
            <person name="de Daruvar A."/>
            <person name="Despons L."/>
            <person name="Fabre E."/>
            <person name="Fairhead C."/>
            <person name="Ferry-Dumazet H."/>
            <person name="Groppi A."/>
            <person name="Hantraye F."/>
            <person name="Hennequin C."/>
            <person name="Jauniaux N."/>
            <person name="Joyet P."/>
            <person name="Kachouri R."/>
            <person name="Kerrest A."/>
            <person name="Koszul R."/>
            <person name="Lemaire M."/>
            <person name="Lesur I."/>
            <person name="Ma L."/>
            <person name="Muller H."/>
            <person name="Nicaud J.-M."/>
            <person name="Nikolski M."/>
            <person name="Oztas S."/>
            <person name="Ozier-Kalogeropoulos O."/>
            <person name="Pellenz S."/>
            <person name="Potier S."/>
            <person name="Richard G.-F."/>
            <person name="Straub M.-L."/>
            <person name="Suleau A."/>
            <person name="Swennen D."/>
            <person name="Tekaia F."/>
            <person name="Wesolowski-Louvel M."/>
            <person name="Westhof E."/>
            <person name="Wirth B."/>
            <person name="Zeniou-Meyer M."/>
            <person name="Zivanovic Y."/>
            <person name="Bolotin-Fukuhara M."/>
            <person name="Thierry A."/>
            <person name="Bouchier C."/>
            <person name="Caudron B."/>
            <person name="Scarpelli C."/>
            <person name="Gaillardin C."/>
            <person name="Weissenbach J."/>
            <person name="Wincker P."/>
            <person name="Souciet J.-L."/>
        </authorList>
    </citation>
    <scope>NUCLEOTIDE SEQUENCE [LARGE SCALE GENOMIC DNA]</scope>
    <source>
        <strain>ATCC 36239 / CBS 767 / BCRC 21394 / JCM 1990 / NBRC 0083 / IGC 2968</strain>
    </source>
</reference>